<comment type="function">
    <text evidence="1 2 3">Arginine attenuator peptide (AAP) that has a regulatory role in the production of arginine-specific carbamoyl phosphate synthetase. Encoded by an upstream open reading frame (uORF) within the 5'-leader region of arginine-specific carbamoyl phosphate synthetase small chain (CPA1) mRNA, it attenuates the translation of the downstream CPA1 ORF. In the presence of high concentrations of arginine, ribosomes translating the uORF encoding AAP stall at the termination codon, resulting in reduced translation from the downstream CPA1 initiation codon.</text>
</comment>
<comment type="similarity">
    <text evidence="4">Belongs to the arginine attenuator peptide family.</text>
</comment>
<name>AAP_YEAST</name>
<evidence type="ECO:0000269" key="1">
    <source>
    </source>
</evidence>
<evidence type="ECO:0000269" key="2">
    <source>
    </source>
</evidence>
<evidence type="ECO:0000269" key="3">
    <source>
    </source>
</evidence>
<evidence type="ECO:0000305" key="4"/>
<proteinExistence type="evidence at protein level"/>
<accession>P08521</accession>
<accession>D6W301</accession>
<protein>
    <recommendedName>
        <fullName>Arginine attenuator peptide</fullName>
        <shortName>AAP</shortName>
    </recommendedName>
    <alternativeName>
        <fullName>CPA1 leader peptide</fullName>
    </alternativeName>
</protein>
<gene>
    <name type="ordered locus">YOR302W</name>
</gene>
<sequence>MFSLSNSQYTCQDYISDHIWKTSSH</sequence>
<dbReference type="EMBL" id="X01764">
    <property type="protein sequence ID" value="CAA25904.1"/>
    <property type="molecule type" value="Genomic_DNA"/>
</dbReference>
<dbReference type="EMBL" id="M16690">
    <property type="protein sequence ID" value="AAA34526.1"/>
    <property type="molecule type" value="Genomic_DNA"/>
</dbReference>
<dbReference type="EMBL" id="Z75210">
    <property type="protein sequence ID" value="CAA99620.1"/>
    <property type="molecule type" value="Genomic_DNA"/>
</dbReference>
<dbReference type="EMBL" id="BK006948">
    <property type="protein sequence ID" value="DAA11067.1"/>
    <property type="molecule type" value="Genomic_DNA"/>
</dbReference>
<dbReference type="PIR" id="S25434">
    <property type="entry name" value="S25434"/>
</dbReference>
<dbReference type="RefSeq" id="NP_014946.1">
    <property type="nucleotide sequence ID" value="NM_001183721.1"/>
</dbReference>
<dbReference type="BioGRID" id="34690">
    <property type="interactions" value="14"/>
</dbReference>
<dbReference type="DIP" id="DIP-1273N"/>
<dbReference type="FunCoup" id="P08521">
    <property type="interactions" value="71"/>
</dbReference>
<dbReference type="IntAct" id="P08521">
    <property type="interactions" value="3"/>
</dbReference>
<dbReference type="MINT" id="P08521"/>
<dbReference type="STRING" id="4932.YOR302W"/>
<dbReference type="PaxDb" id="4932-YOR302W"/>
<dbReference type="EnsemblFungi" id="YOR302W_mRNA">
    <property type="protein sequence ID" value="YOR302W"/>
    <property type="gene ID" value="YOR302W"/>
</dbReference>
<dbReference type="GeneID" id="854478"/>
<dbReference type="KEGG" id="sce:YOR302W"/>
<dbReference type="AGR" id="SGD:S000005828"/>
<dbReference type="SGD" id="S000005828">
    <property type="gene designation" value="YOR302W"/>
</dbReference>
<dbReference type="VEuPathDB" id="FungiDB:YOR302W"/>
<dbReference type="HOGENOM" id="CLU_221820_0_0_1"/>
<dbReference type="InParanoid" id="P08521"/>
<dbReference type="BioCyc" id="YEAST:G3O-33786-MONOMER"/>
<dbReference type="BioGRID-ORCS" id="854478">
    <property type="hits" value="0 hits in 10 CRISPR screens"/>
</dbReference>
<dbReference type="PRO" id="PR:P08521"/>
<dbReference type="Proteomes" id="UP000002311">
    <property type="component" value="Chromosome XV"/>
</dbReference>
<dbReference type="GO" id="GO:0005829">
    <property type="term" value="C:cytosol"/>
    <property type="evidence" value="ECO:0000305"/>
    <property type="project" value="SGD"/>
</dbReference>
<dbReference type="GO" id="GO:0045182">
    <property type="term" value="F:translation regulator activity"/>
    <property type="evidence" value="ECO:0000314"/>
    <property type="project" value="SGD"/>
</dbReference>
<dbReference type="GO" id="GO:0006417">
    <property type="term" value="P:regulation of translation"/>
    <property type="evidence" value="ECO:0000314"/>
    <property type="project" value="SGD"/>
</dbReference>
<dbReference type="InterPro" id="IPR013203">
    <property type="entry name" value="Leader_Arg2_CPA1"/>
</dbReference>
<dbReference type="Pfam" id="PF08252">
    <property type="entry name" value="Leader_CPA1"/>
    <property type="match status" value="1"/>
</dbReference>
<keyword id="KW-0428">Leader peptide</keyword>
<keyword id="KW-1185">Reference proteome</keyword>
<reference key="1">
    <citation type="journal article" date="1985" name="Eur. J. Biochem.">
        <title>Nucleotide sequence of yeast gene CP A1 encoding the small subunit of arginine-pathway carbamoyl-phosphate synthetase. Homology of the deduced amino acid sequence to other glutamine amidotransferases.</title>
        <authorList>
            <person name="Werner M."/>
            <person name="Feller A."/>
            <person name="Pierard A."/>
        </authorList>
    </citation>
    <scope>NUCLEOTIDE SEQUENCE [GENOMIC DNA]</scope>
</reference>
<reference key="2">
    <citation type="journal article" date="1987" name="Cell">
        <title>The leader peptide of yeast gene CPA1 is essential for the translational repression of its expression.</title>
        <authorList>
            <person name="Werner M."/>
            <person name="Feller A."/>
            <person name="Messenguy F."/>
            <person name="Pierard A."/>
        </authorList>
    </citation>
    <scope>NUCLEOTIDE SEQUENCE [GENOMIC DNA]</scope>
    <scope>FUNCTION</scope>
    <scope>MUTAGENESIS OF ASP-13</scope>
</reference>
<reference key="3">
    <citation type="journal article" date="1997" name="Yeast">
        <title>Sequence and analysis of a 36.2 kb fragment from the right arm of yeast chromosome XV reveals 19 open reading frames including SNF2 (5' end), CPA1, SLY41, a putative transport ATPase, a putative ribosomal protein and an SNF2 homologue.</title>
        <authorList>
            <person name="Poirey R."/>
            <person name="Cziepluch C."/>
            <person name="Tobiasch E."/>
            <person name="Pujol A."/>
            <person name="Kordes E."/>
            <person name="Jauniaux J.-C."/>
        </authorList>
    </citation>
    <scope>NUCLEOTIDE SEQUENCE [GENOMIC DNA]</scope>
    <source>
        <strain>ATCC 96604 / S288c / FY1679</strain>
    </source>
</reference>
<reference key="4">
    <citation type="journal article" date="1997" name="Nature">
        <title>The nucleotide sequence of Saccharomyces cerevisiae chromosome XV.</title>
        <authorList>
            <person name="Dujon B."/>
            <person name="Albermann K."/>
            <person name="Aldea M."/>
            <person name="Alexandraki D."/>
            <person name="Ansorge W."/>
            <person name="Arino J."/>
            <person name="Benes V."/>
            <person name="Bohn C."/>
            <person name="Bolotin-Fukuhara M."/>
            <person name="Bordonne R."/>
            <person name="Boyer J."/>
            <person name="Camasses A."/>
            <person name="Casamayor A."/>
            <person name="Casas C."/>
            <person name="Cheret G."/>
            <person name="Cziepluch C."/>
            <person name="Daignan-Fornier B."/>
            <person name="Dang V.-D."/>
            <person name="de Haan M."/>
            <person name="Delius H."/>
            <person name="Durand P."/>
            <person name="Fairhead C."/>
            <person name="Feldmann H."/>
            <person name="Gaillon L."/>
            <person name="Galisson F."/>
            <person name="Gamo F.-J."/>
            <person name="Gancedo C."/>
            <person name="Goffeau A."/>
            <person name="Goulding S.E."/>
            <person name="Grivell L.A."/>
            <person name="Habbig B."/>
            <person name="Hand N.J."/>
            <person name="Hani J."/>
            <person name="Hattenhorst U."/>
            <person name="Hebling U."/>
            <person name="Hernando Y."/>
            <person name="Herrero E."/>
            <person name="Heumann K."/>
            <person name="Hiesel R."/>
            <person name="Hilger F."/>
            <person name="Hofmann B."/>
            <person name="Hollenberg C.P."/>
            <person name="Hughes B."/>
            <person name="Jauniaux J.-C."/>
            <person name="Kalogeropoulos A."/>
            <person name="Katsoulou C."/>
            <person name="Kordes E."/>
            <person name="Lafuente M.J."/>
            <person name="Landt O."/>
            <person name="Louis E.J."/>
            <person name="Maarse A.C."/>
            <person name="Madania A."/>
            <person name="Mannhaupt G."/>
            <person name="Marck C."/>
            <person name="Martin R.P."/>
            <person name="Mewes H.-W."/>
            <person name="Michaux G."/>
            <person name="Paces V."/>
            <person name="Parle-McDermott A.G."/>
            <person name="Pearson B.M."/>
            <person name="Perrin A."/>
            <person name="Pettersson B."/>
            <person name="Poch O."/>
            <person name="Pohl T.M."/>
            <person name="Poirey R."/>
            <person name="Portetelle D."/>
            <person name="Pujol A."/>
            <person name="Purnelle B."/>
            <person name="Ramezani Rad M."/>
            <person name="Rechmann S."/>
            <person name="Schwager C."/>
            <person name="Schweizer M."/>
            <person name="Sor F."/>
            <person name="Sterky F."/>
            <person name="Tarassov I.A."/>
            <person name="Teodoru C."/>
            <person name="Tettelin H."/>
            <person name="Thierry A."/>
            <person name="Tobiasch E."/>
            <person name="Tzermia M."/>
            <person name="Uhlen M."/>
            <person name="Unseld M."/>
            <person name="Valens M."/>
            <person name="Vandenbol M."/>
            <person name="Vetter I."/>
            <person name="Vlcek C."/>
            <person name="Voet M."/>
            <person name="Volckaert G."/>
            <person name="Voss H."/>
            <person name="Wambutt R."/>
            <person name="Wedler H."/>
            <person name="Wiemann S."/>
            <person name="Winsor B."/>
            <person name="Wolfe K.H."/>
            <person name="Zollner A."/>
            <person name="Zumstein E."/>
            <person name="Kleine K."/>
        </authorList>
    </citation>
    <scope>NUCLEOTIDE SEQUENCE [LARGE SCALE GENOMIC DNA]</scope>
    <source>
        <strain>ATCC 204508 / S288c</strain>
    </source>
</reference>
<reference key="5">
    <citation type="journal article" date="2014" name="G3 (Bethesda)">
        <title>The reference genome sequence of Saccharomyces cerevisiae: Then and now.</title>
        <authorList>
            <person name="Engel S.R."/>
            <person name="Dietrich F.S."/>
            <person name="Fisk D.G."/>
            <person name="Binkley G."/>
            <person name="Balakrishnan R."/>
            <person name="Costanzo M.C."/>
            <person name="Dwight S.S."/>
            <person name="Hitz B.C."/>
            <person name="Karra K."/>
            <person name="Nash R.S."/>
            <person name="Weng S."/>
            <person name="Wong E.D."/>
            <person name="Lloyd P."/>
            <person name="Skrzypek M.S."/>
            <person name="Miyasato S.R."/>
            <person name="Simison M."/>
            <person name="Cherry J.M."/>
        </authorList>
    </citation>
    <scope>GENOME REANNOTATION</scope>
    <source>
        <strain>ATCC 204508 / S288c</strain>
    </source>
</reference>
<reference key="6">
    <citation type="journal article" date="1999" name="J. Biol. Chem.">
        <title>A highly conserved mechanism of regulated ribosome stalling mediated by fungal arginine attenuator peptides that appears independent of the charging status of arginyl-tRNAs.</title>
        <authorList>
            <person name="Wang Z."/>
            <person name="Gaba A."/>
            <person name="Sachs M.S."/>
        </authorList>
    </citation>
    <scope>FUNCTION</scope>
</reference>
<reference key="7">
    <citation type="journal article" date="2000" name="Curr. Genet.">
        <title>Functional analysis of the leader peptide of the yeast gene CPA1 and heterologous regulation by other fungal peptides.</title>
        <authorList>
            <person name="Delbecq P."/>
            <person name="Calvo O."/>
            <person name="Filipkowski R.K."/>
            <person name="Pierard A."/>
            <person name="Messenguy F."/>
        </authorList>
    </citation>
    <scope>FUNCTION</scope>
</reference>
<feature type="peptide" id="PRO_0000043974" description="Arginine attenuator peptide">
    <location>
        <begin position="1"/>
        <end position="25"/>
    </location>
</feature>
<feature type="mutagenesis site" description="Eliminates arginine-specific stalling of ribosomes at the termination codon." evidence="3">
    <original>D</original>
    <variation>N</variation>
    <location>
        <position position="13"/>
    </location>
</feature>
<organism>
    <name type="scientific">Saccharomyces cerevisiae (strain ATCC 204508 / S288c)</name>
    <name type="common">Baker's yeast</name>
    <dbReference type="NCBI Taxonomy" id="559292"/>
    <lineage>
        <taxon>Eukaryota</taxon>
        <taxon>Fungi</taxon>
        <taxon>Dikarya</taxon>
        <taxon>Ascomycota</taxon>
        <taxon>Saccharomycotina</taxon>
        <taxon>Saccharomycetes</taxon>
        <taxon>Saccharomycetales</taxon>
        <taxon>Saccharomycetaceae</taxon>
        <taxon>Saccharomyces</taxon>
    </lineage>
</organism>